<comment type="function">
    <text evidence="1">Mitochondrial GTPase involved in mitochondrial trafficking. Probably involved in control of anterograde transport of mitochondria and their subcellular distribution.</text>
</comment>
<comment type="subcellular location">
    <subcellularLocation>
        <location evidence="1">Mitochondrion outer membrane</location>
        <topology evidence="1">Single-pass type IV membrane protein</topology>
    </subcellularLocation>
</comment>
<comment type="similarity">
    <text evidence="4 5">Belongs to the mitochondrial Rho GTPase family.</text>
</comment>
<protein>
    <recommendedName>
        <fullName>Mitochondrial Rho GTPase 1</fullName>
        <ecNumber>3.6.5.-</ecNumber>
    </recommendedName>
    <alternativeName>
        <fullName>GTPase EF-hand protein of mitochondria 1</fullName>
    </alternativeName>
</protein>
<proteinExistence type="inferred from homology"/>
<evidence type="ECO:0000250" key="1">
    <source>
        <dbReference type="UniProtKB" id="P39722"/>
    </source>
</evidence>
<evidence type="ECO:0000255" key="2"/>
<evidence type="ECO:0000255" key="3">
    <source>
        <dbReference type="PROSITE-ProRule" id="PRU00448"/>
    </source>
</evidence>
<evidence type="ECO:0000255" key="4">
    <source>
        <dbReference type="PROSITE-ProRule" id="PRU00757"/>
    </source>
</evidence>
<evidence type="ECO:0000305" key="5"/>
<sequence>MPRRDLVRIVLVGDDGVGKSSIITSLIKEAFVTNVPHVVPEVTIPPEITPENFTTSIVDTSSNPRSRPHLLSSISRAHVICLVYSIADPSSFDRVAEYWLPLFRREGINVPVILVGNKIDLRGGRVTNQGLEDESAPIMREFKEVETVVECSALLPLNVSEVFYFAQKAVLHPTAPLYDSREHTLKPKCLEALKRIFTISDVDKDGLLNAHELNQFQQKCFSTPLQSQELDGILEIVRSYDPYAVQPLPSSSPNTPLSRDSSYGQLHYFNNNVVPPSPPQEGITELGFLYLHTMFIQQGRMETTWTVLRKFGYGESLDLREDFLAPKFDVPSDCSVELSPLGNQFLTDIFEAYDKDQDGALSQNELDDLFSTSPGNPWLSQGFPDTTITDDMGRVTLQGWLAQWSMTTLLNHRTTLNYLAYLGYSSSPATDLPTPTALHVTRPRKQDRRQRKVTRNVFLCYVLGATGSGKTSLLRSFVNRPFKGGEDGLGGYEPTTKVLSVVNSVEMEGVEKYLVLQEFGSKYESEILRNSKRLDMADIIIYVHDSSDTNSFSYISNLRQQYSLDHIPSIFVATKSDLDLAQQRHEVQPDVYCRRLGLQAPMAVSSRLGPLHNLWVAITRVALDPTSSLPRGPRSQMSPAQRIRVVARWGLAATTISAIVAVWMKWQGYSFKGIWGWMAKFAGLRT</sequence>
<reference key="1">
    <citation type="journal article" date="2005" name="Science">
        <title>The genome of the basidiomycetous yeast and human pathogen Cryptococcus neoformans.</title>
        <authorList>
            <person name="Loftus B.J."/>
            <person name="Fung E."/>
            <person name="Roncaglia P."/>
            <person name="Rowley D."/>
            <person name="Amedeo P."/>
            <person name="Bruno D."/>
            <person name="Vamathevan J."/>
            <person name="Miranda M."/>
            <person name="Anderson I.J."/>
            <person name="Fraser J.A."/>
            <person name="Allen J.E."/>
            <person name="Bosdet I.E."/>
            <person name="Brent M.R."/>
            <person name="Chiu R."/>
            <person name="Doering T.L."/>
            <person name="Donlin M.J."/>
            <person name="D'Souza C.A."/>
            <person name="Fox D.S."/>
            <person name="Grinberg V."/>
            <person name="Fu J."/>
            <person name="Fukushima M."/>
            <person name="Haas B.J."/>
            <person name="Huang J.C."/>
            <person name="Janbon G."/>
            <person name="Jones S.J.M."/>
            <person name="Koo H.L."/>
            <person name="Krzywinski M.I."/>
            <person name="Kwon-Chung K.J."/>
            <person name="Lengeler K.B."/>
            <person name="Maiti R."/>
            <person name="Marra M.A."/>
            <person name="Marra R.E."/>
            <person name="Mathewson C.A."/>
            <person name="Mitchell T.G."/>
            <person name="Pertea M."/>
            <person name="Riggs F.R."/>
            <person name="Salzberg S.L."/>
            <person name="Schein J.E."/>
            <person name="Shvartsbeyn A."/>
            <person name="Shin H."/>
            <person name="Shumway M."/>
            <person name="Specht C.A."/>
            <person name="Suh B.B."/>
            <person name="Tenney A."/>
            <person name="Utterback T.R."/>
            <person name="Wickes B.L."/>
            <person name="Wortman J.R."/>
            <person name="Wye N.H."/>
            <person name="Kronstad J.W."/>
            <person name="Lodge J.K."/>
            <person name="Heitman J."/>
            <person name="Davis R.W."/>
            <person name="Fraser C.M."/>
            <person name="Hyman R.W."/>
        </authorList>
    </citation>
    <scope>NUCLEOTIDE SEQUENCE [LARGE SCALE GENOMIC DNA]</scope>
    <source>
        <strain>B-3501A</strain>
    </source>
</reference>
<name>GEM1_CRYNB</name>
<accession>P0CO79</accession>
<accession>Q55RA5</accession>
<accession>Q5KEW5</accession>
<feature type="chain" id="PRO_0000410146" description="Mitochondrial Rho GTPase 1">
    <location>
        <begin position="1"/>
        <end position="686"/>
    </location>
</feature>
<feature type="topological domain" description="Cytoplasmic" evidence="2">
    <location>
        <begin position="1"/>
        <end position="648"/>
    </location>
</feature>
<feature type="transmembrane region" description="Helical; Anchor for type IV membrane protein" evidence="2">
    <location>
        <begin position="649"/>
        <end position="665"/>
    </location>
</feature>
<feature type="topological domain" description="Mitochondrial intermembrane" evidence="2">
    <location>
        <begin position="666"/>
        <end position="686"/>
    </location>
</feature>
<feature type="domain" description="Miro 1" evidence="4">
    <location>
        <begin position="4"/>
        <end position="172"/>
    </location>
</feature>
<feature type="domain" description="EF-hand 1" evidence="3">
    <location>
        <begin position="188"/>
        <end position="223"/>
    </location>
</feature>
<feature type="domain" description="EF-hand 2" evidence="3">
    <location>
        <begin position="341"/>
        <end position="376"/>
    </location>
</feature>
<feature type="domain" description="Miro 2" evidence="4">
    <location>
        <begin position="455"/>
        <end position="624"/>
    </location>
</feature>
<feature type="binding site" evidence="2">
    <location>
        <begin position="13"/>
        <end position="20"/>
    </location>
    <ligand>
        <name>GTP</name>
        <dbReference type="ChEBI" id="CHEBI:37565"/>
        <label>1</label>
    </ligand>
</feature>
<feature type="binding site" evidence="2">
    <location>
        <begin position="59"/>
        <end position="63"/>
    </location>
    <ligand>
        <name>GTP</name>
        <dbReference type="ChEBI" id="CHEBI:37565"/>
        <label>1</label>
    </ligand>
</feature>
<feature type="binding site" evidence="2">
    <location>
        <begin position="117"/>
        <end position="120"/>
    </location>
    <ligand>
        <name>GTP</name>
        <dbReference type="ChEBI" id="CHEBI:37565"/>
        <label>1</label>
    </ligand>
</feature>
<feature type="binding site" evidence="3">
    <location>
        <position position="201"/>
    </location>
    <ligand>
        <name>Ca(2+)</name>
        <dbReference type="ChEBI" id="CHEBI:29108"/>
        <label>1</label>
    </ligand>
</feature>
<feature type="binding site" evidence="3">
    <location>
        <position position="203"/>
    </location>
    <ligand>
        <name>Ca(2+)</name>
        <dbReference type="ChEBI" id="CHEBI:29108"/>
        <label>1</label>
    </ligand>
</feature>
<feature type="binding site" evidence="3">
    <location>
        <position position="205"/>
    </location>
    <ligand>
        <name>Ca(2+)</name>
        <dbReference type="ChEBI" id="CHEBI:29108"/>
        <label>1</label>
    </ligand>
</feature>
<feature type="binding site" evidence="3">
    <location>
        <position position="212"/>
    </location>
    <ligand>
        <name>Ca(2+)</name>
        <dbReference type="ChEBI" id="CHEBI:29108"/>
        <label>1</label>
    </ligand>
</feature>
<feature type="binding site" evidence="3">
    <location>
        <position position="354"/>
    </location>
    <ligand>
        <name>Ca(2+)</name>
        <dbReference type="ChEBI" id="CHEBI:29108"/>
        <label>2</label>
    </ligand>
</feature>
<feature type="binding site" evidence="3">
    <location>
        <position position="356"/>
    </location>
    <ligand>
        <name>Ca(2+)</name>
        <dbReference type="ChEBI" id="CHEBI:29108"/>
        <label>2</label>
    </ligand>
</feature>
<feature type="binding site" evidence="3">
    <location>
        <position position="358"/>
    </location>
    <ligand>
        <name>Ca(2+)</name>
        <dbReference type="ChEBI" id="CHEBI:29108"/>
        <label>2</label>
    </ligand>
</feature>
<feature type="binding site" evidence="3">
    <location>
        <position position="365"/>
    </location>
    <ligand>
        <name>Ca(2+)</name>
        <dbReference type="ChEBI" id="CHEBI:29108"/>
        <label>2</label>
    </ligand>
</feature>
<feature type="binding site" evidence="2">
    <location>
        <begin position="464"/>
        <end position="471"/>
    </location>
    <ligand>
        <name>GTP</name>
        <dbReference type="ChEBI" id="CHEBI:37565"/>
        <label>2</label>
    </ligand>
</feature>
<feature type="binding site" evidence="2">
    <location>
        <begin position="506"/>
        <end position="510"/>
    </location>
    <ligand>
        <name>GTP</name>
        <dbReference type="ChEBI" id="CHEBI:37565"/>
        <label>2</label>
    </ligand>
</feature>
<feature type="binding site" evidence="2">
    <location>
        <begin position="574"/>
        <end position="577"/>
    </location>
    <ligand>
        <name>GTP</name>
        <dbReference type="ChEBI" id="CHEBI:37565"/>
        <label>2</label>
    </ligand>
</feature>
<keyword id="KW-0106">Calcium</keyword>
<keyword id="KW-0342">GTP-binding</keyword>
<keyword id="KW-0378">Hydrolase</keyword>
<keyword id="KW-0472">Membrane</keyword>
<keyword id="KW-0479">Metal-binding</keyword>
<keyword id="KW-0496">Mitochondrion</keyword>
<keyword id="KW-1000">Mitochondrion outer membrane</keyword>
<keyword id="KW-0547">Nucleotide-binding</keyword>
<keyword id="KW-0677">Repeat</keyword>
<keyword id="KW-0812">Transmembrane</keyword>
<keyword id="KW-1133">Transmembrane helix</keyword>
<dbReference type="EC" id="3.6.5.-"/>
<dbReference type="EMBL" id="AAEY01000030">
    <property type="protein sequence ID" value="EAL20274.1"/>
    <property type="molecule type" value="Genomic_DNA"/>
</dbReference>
<dbReference type="RefSeq" id="XP_774921.1">
    <property type="nucleotide sequence ID" value="XM_769828.1"/>
</dbReference>
<dbReference type="SMR" id="P0CO79"/>
<dbReference type="EnsemblFungi" id="AAW44051">
    <property type="protein sequence ID" value="AAW44051"/>
    <property type="gene ID" value="CNF03990"/>
</dbReference>
<dbReference type="GeneID" id="4936638"/>
<dbReference type="KEGG" id="cnb:CNBF0860"/>
<dbReference type="VEuPathDB" id="FungiDB:CNBF0860"/>
<dbReference type="HOGENOM" id="CLU_014255_3_0_1"/>
<dbReference type="OrthoDB" id="2373at5206"/>
<dbReference type="GO" id="GO:0032865">
    <property type="term" value="C:ERMES complex"/>
    <property type="evidence" value="ECO:0007669"/>
    <property type="project" value="EnsemblFungi"/>
</dbReference>
<dbReference type="GO" id="GO:0005509">
    <property type="term" value="F:calcium ion binding"/>
    <property type="evidence" value="ECO:0007669"/>
    <property type="project" value="EnsemblFungi"/>
</dbReference>
<dbReference type="GO" id="GO:0005525">
    <property type="term" value="F:GTP binding"/>
    <property type="evidence" value="ECO:0007669"/>
    <property type="project" value="UniProtKB-KW"/>
</dbReference>
<dbReference type="GO" id="GO:0003924">
    <property type="term" value="F:GTPase activity"/>
    <property type="evidence" value="ECO:0007669"/>
    <property type="project" value="EnsemblFungi"/>
</dbReference>
<dbReference type="GO" id="GO:0015886">
    <property type="term" value="P:heme transport"/>
    <property type="evidence" value="ECO:0007669"/>
    <property type="project" value="EnsemblFungi"/>
</dbReference>
<dbReference type="GO" id="GO:0000001">
    <property type="term" value="P:mitochondrion inheritance"/>
    <property type="evidence" value="ECO:0007669"/>
    <property type="project" value="EnsemblFungi"/>
</dbReference>
<dbReference type="GO" id="GO:0007005">
    <property type="term" value="P:mitochondrion organization"/>
    <property type="evidence" value="ECO:0007669"/>
    <property type="project" value="InterPro"/>
</dbReference>
<dbReference type="GO" id="GO:1990456">
    <property type="term" value="P:mitochondrion-endoplasmic reticulum membrane tethering"/>
    <property type="evidence" value="ECO:0007669"/>
    <property type="project" value="EnsemblFungi"/>
</dbReference>
<dbReference type="GO" id="GO:0055091">
    <property type="term" value="P:phospholipid homeostasis"/>
    <property type="evidence" value="ECO:0007669"/>
    <property type="project" value="EnsemblFungi"/>
</dbReference>
<dbReference type="GO" id="GO:0010821">
    <property type="term" value="P:regulation of mitochondrion organization"/>
    <property type="evidence" value="ECO:0007669"/>
    <property type="project" value="EnsemblFungi"/>
</dbReference>
<dbReference type="CDD" id="cd01893">
    <property type="entry name" value="Miro1"/>
    <property type="match status" value="1"/>
</dbReference>
<dbReference type="CDD" id="cd01892">
    <property type="entry name" value="Miro2"/>
    <property type="match status" value="1"/>
</dbReference>
<dbReference type="FunFam" id="3.40.50.300:FF:000553">
    <property type="entry name" value="Mitochondrial Rho GTPase"/>
    <property type="match status" value="1"/>
</dbReference>
<dbReference type="FunFam" id="1.10.238.10:FF:000277">
    <property type="entry name" value="Mitochondrial Rho GTPase 1"/>
    <property type="match status" value="1"/>
</dbReference>
<dbReference type="FunFam" id="3.40.50.300:FF:001330">
    <property type="entry name" value="Mitochondrial Rho GTPase 1"/>
    <property type="match status" value="1"/>
</dbReference>
<dbReference type="Gene3D" id="1.10.238.10">
    <property type="entry name" value="EF-hand"/>
    <property type="match status" value="2"/>
</dbReference>
<dbReference type="Gene3D" id="3.40.50.300">
    <property type="entry name" value="P-loop containing nucleotide triphosphate hydrolases"/>
    <property type="match status" value="2"/>
</dbReference>
<dbReference type="InterPro" id="IPR011992">
    <property type="entry name" value="EF-hand-dom_pair"/>
</dbReference>
<dbReference type="InterPro" id="IPR018247">
    <property type="entry name" value="EF_Hand_1_Ca_BS"/>
</dbReference>
<dbReference type="InterPro" id="IPR013566">
    <property type="entry name" value="EF_hand_assoc_1"/>
</dbReference>
<dbReference type="InterPro" id="IPR013567">
    <property type="entry name" value="EF_hand_assoc_2"/>
</dbReference>
<dbReference type="InterPro" id="IPR002048">
    <property type="entry name" value="EF_hand_dom"/>
</dbReference>
<dbReference type="InterPro" id="IPR021181">
    <property type="entry name" value="Miro"/>
</dbReference>
<dbReference type="InterPro" id="IPR052266">
    <property type="entry name" value="Miro-EF-hand_domain"/>
</dbReference>
<dbReference type="InterPro" id="IPR020860">
    <property type="entry name" value="MIRO_dom"/>
</dbReference>
<dbReference type="InterPro" id="IPR027417">
    <property type="entry name" value="P-loop_NTPase"/>
</dbReference>
<dbReference type="InterPro" id="IPR001806">
    <property type="entry name" value="Small_GTPase"/>
</dbReference>
<dbReference type="PANTHER" id="PTHR46819">
    <property type="entry name" value="EF-HAND CALCIUM-BINDING DOMAIN-CONTAINING PROTEIN 7"/>
    <property type="match status" value="1"/>
</dbReference>
<dbReference type="PANTHER" id="PTHR46819:SF1">
    <property type="entry name" value="EF-HAND CALCIUM-BINDING DOMAIN-CONTAINING PROTEIN 7"/>
    <property type="match status" value="1"/>
</dbReference>
<dbReference type="Pfam" id="PF08355">
    <property type="entry name" value="EF_assoc_1"/>
    <property type="match status" value="1"/>
</dbReference>
<dbReference type="Pfam" id="PF08356">
    <property type="entry name" value="EF_assoc_2"/>
    <property type="match status" value="1"/>
</dbReference>
<dbReference type="Pfam" id="PF00071">
    <property type="entry name" value="Ras"/>
    <property type="match status" value="2"/>
</dbReference>
<dbReference type="PIRSF" id="PIRSF037488">
    <property type="entry name" value="Mt_Rho_GTPase"/>
    <property type="match status" value="1"/>
</dbReference>
<dbReference type="PRINTS" id="PR00449">
    <property type="entry name" value="RASTRNSFRMNG"/>
</dbReference>
<dbReference type="SMART" id="SM00054">
    <property type="entry name" value="EFh"/>
    <property type="match status" value="2"/>
</dbReference>
<dbReference type="SMART" id="SM00175">
    <property type="entry name" value="RAB"/>
    <property type="match status" value="1"/>
</dbReference>
<dbReference type="SMART" id="SM00173">
    <property type="entry name" value="RAS"/>
    <property type="match status" value="1"/>
</dbReference>
<dbReference type="SMART" id="SM00174">
    <property type="entry name" value="RHO"/>
    <property type="match status" value="1"/>
</dbReference>
<dbReference type="SUPFAM" id="SSF47473">
    <property type="entry name" value="EF-hand"/>
    <property type="match status" value="1"/>
</dbReference>
<dbReference type="SUPFAM" id="SSF52540">
    <property type="entry name" value="P-loop containing nucleoside triphosphate hydrolases"/>
    <property type="match status" value="2"/>
</dbReference>
<dbReference type="PROSITE" id="PS00018">
    <property type="entry name" value="EF_HAND_1"/>
    <property type="match status" value="2"/>
</dbReference>
<dbReference type="PROSITE" id="PS50222">
    <property type="entry name" value="EF_HAND_2"/>
    <property type="match status" value="2"/>
</dbReference>
<dbReference type="PROSITE" id="PS51423">
    <property type="entry name" value="MIRO"/>
    <property type="match status" value="2"/>
</dbReference>
<organism>
    <name type="scientific">Cryptococcus neoformans var. neoformans serotype D (strain B-3501A)</name>
    <name type="common">Filobasidiella neoformans</name>
    <dbReference type="NCBI Taxonomy" id="283643"/>
    <lineage>
        <taxon>Eukaryota</taxon>
        <taxon>Fungi</taxon>
        <taxon>Dikarya</taxon>
        <taxon>Basidiomycota</taxon>
        <taxon>Agaricomycotina</taxon>
        <taxon>Tremellomycetes</taxon>
        <taxon>Tremellales</taxon>
        <taxon>Cryptococcaceae</taxon>
        <taxon>Cryptococcus</taxon>
        <taxon>Cryptococcus neoformans species complex</taxon>
    </lineage>
</organism>
<gene>
    <name type="primary">GEM1</name>
    <name type="ordered locus">CNBF0860</name>
</gene>